<name>SYP_LEPBP</name>
<accession>B0SM58</accession>
<comment type="function">
    <text evidence="1">Catalyzes the attachment of proline to tRNA(Pro) in a two-step reaction: proline is first activated by ATP to form Pro-AMP and then transferred to the acceptor end of tRNA(Pro). As ProRS can inadvertently accommodate and process non-cognate amino acids such as alanine and cysteine, to avoid such errors it has two additional distinct editing activities against alanine. One activity is designated as 'pretransfer' editing and involves the tRNA(Pro)-independent hydrolysis of activated Ala-AMP. The other activity is designated 'posttransfer' editing and involves deacylation of mischarged Ala-tRNA(Pro). The misacylated Cys-tRNA(Pro) is not edited by ProRS.</text>
</comment>
<comment type="catalytic activity">
    <reaction evidence="1">
        <text>tRNA(Pro) + L-proline + ATP = L-prolyl-tRNA(Pro) + AMP + diphosphate</text>
        <dbReference type="Rhea" id="RHEA:14305"/>
        <dbReference type="Rhea" id="RHEA-COMP:9700"/>
        <dbReference type="Rhea" id="RHEA-COMP:9702"/>
        <dbReference type="ChEBI" id="CHEBI:30616"/>
        <dbReference type="ChEBI" id="CHEBI:33019"/>
        <dbReference type="ChEBI" id="CHEBI:60039"/>
        <dbReference type="ChEBI" id="CHEBI:78442"/>
        <dbReference type="ChEBI" id="CHEBI:78532"/>
        <dbReference type="ChEBI" id="CHEBI:456215"/>
        <dbReference type="EC" id="6.1.1.15"/>
    </reaction>
</comment>
<comment type="subunit">
    <text evidence="1">Homodimer.</text>
</comment>
<comment type="subcellular location">
    <subcellularLocation>
        <location evidence="1">Cytoplasm</location>
    </subcellularLocation>
</comment>
<comment type="domain">
    <text evidence="1">Consists of three domains: the N-terminal catalytic domain, the editing domain and the C-terminal anticodon-binding domain.</text>
</comment>
<comment type="similarity">
    <text evidence="1">Belongs to the class-II aminoacyl-tRNA synthetase family. ProS type 1 subfamily.</text>
</comment>
<organism>
    <name type="scientific">Leptospira biflexa serovar Patoc (strain Patoc 1 / ATCC 23582 / Paris)</name>
    <dbReference type="NCBI Taxonomy" id="456481"/>
    <lineage>
        <taxon>Bacteria</taxon>
        <taxon>Pseudomonadati</taxon>
        <taxon>Spirochaetota</taxon>
        <taxon>Spirochaetia</taxon>
        <taxon>Leptospirales</taxon>
        <taxon>Leptospiraceae</taxon>
        <taxon>Leptospira</taxon>
    </lineage>
</organism>
<evidence type="ECO:0000255" key="1">
    <source>
        <dbReference type="HAMAP-Rule" id="MF_01569"/>
    </source>
</evidence>
<feature type="chain" id="PRO_1000199402" description="Proline--tRNA ligase">
    <location>
        <begin position="1"/>
        <end position="586"/>
    </location>
</feature>
<sequence length="586" mass="65331">MKASSYLIPTAKEDPQDAVVASHKLMMRAGLIRKSAAGLYSYLPLGLRVLRKIEGIVRKEMDKAGGLEFQLPILTPSEIWKESGRWDKMGKEMFRLKDRHDNESCLGPTHEESFCVLVKPMVRSYKDLPINVYQIHTKFRDEIRPRFGVIRSREFTMKDAYSFHLDDESLDKTYQTMRKTYRRIFAGMGLTTIPVQADSGNMGGSASEEFMVVSPIGEETLTICPSCHYSGNIEKTPVIVNRNATKQVFDGKGKLHTPAKKSITEVAEFLNTKEENLLKAVAVVADGQYILVFLEGDRELNENKLKNHLGCNELRPMGPAEMEKLGLVPGFIGPGFPKSESLKIYIDALLDWNFSYIAGGNEIDHHIAGVQLTSIFKEEEVTKIDISQAKVGDPCPSCGTGLTAEKGIEVGHIFKLGQKYSKAFDITVLNDKGKATTTTMGCYGIGVNRCMATVIEQCNDEKGIFWPVSIAPFTVCLVSIAKNPDDIAKIETIYKSLVESGIEVLWDDRDLGPGFKFKDSELIGFPIRITLGKGFLEKNEITILDRKSMAEDTLVYTTNEELVTHLKLKISQLEETIEKEVSLAGT</sequence>
<protein>
    <recommendedName>
        <fullName evidence="1">Proline--tRNA ligase</fullName>
        <ecNumber evidence="1">6.1.1.15</ecNumber>
    </recommendedName>
    <alternativeName>
        <fullName evidence="1">Prolyl-tRNA synthetase</fullName>
        <shortName evidence="1">ProRS</shortName>
    </alternativeName>
</protein>
<proteinExistence type="inferred from homology"/>
<reference key="1">
    <citation type="journal article" date="2008" name="PLoS ONE">
        <title>Genome sequence of the saprophyte Leptospira biflexa provides insights into the evolution of Leptospira and the pathogenesis of leptospirosis.</title>
        <authorList>
            <person name="Picardeau M."/>
            <person name="Bulach D.M."/>
            <person name="Bouchier C."/>
            <person name="Zuerner R.L."/>
            <person name="Zidane N."/>
            <person name="Wilson P.J."/>
            <person name="Creno S."/>
            <person name="Kuczek E.S."/>
            <person name="Bommezzadri S."/>
            <person name="Davis J.C."/>
            <person name="McGrath A."/>
            <person name="Johnson M.J."/>
            <person name="Boursaux-Eude C."/>
            <person name="Seemann T."/>
            <person name="Rouy Z."/>
            <person name="Coppel R.L."/>
            <person name="Rood J.I."/>
            <person name="Lajus A."/>
            <person name="Davies J.K."/>
            <person name="Medigue C."/>
            <person name="Adler B."/>
        </authorList>
    </citation>
    <scope>NUCLEOTIDE SEQUENCE [LARGE SCALE GENOMIC DNA]</scope>
    <source>
        <strain>Patoc 1 / ATCC 23582 / Paris</strain>
    </source>
</reference>
<gene>
    <name evidence="1" type="primary">proS</name>
    <name type="ordered locus">LEPBI_I2609</name>
</gene>
<keyword id="KW-0030">Aminoacyl-tRNA synthetase</keyword>
<keyword id="KW-0067">ATP-binding</keyword>
<keyword id="KW-0963">Cytoplasm</keyword>
<keyword id="KW-0436">Ligase</keyword>
<keyword id="KW-0547">Nucleotide-binding</keyword>
<keyword id="KW-0648">Protein biosynthesis</keyword>
<keyword id="KW-1185">Reference proteome</keyword>
<dbReference type="EC" id="6.1.1.15" evidence="1"/>
<dbReference type="EMBL" id="CP000786">
    <property type="protein sequence ID" value="ABZ98688.1"/>
    <property type="molecule type" value="Genomic_DNA"/>
</dbReference>
<dbReference type="RefSeq" id="WP_012389548.1">
    <property type="nucleotide sequence ID" value="NC_010602.1"/>
</dbReference>
<dbReference type="SMR" id="B0SM58"/>
<dbReference type="STRING" id="456481.LEPBI_I2609"/>
<dbReference type="KEGG" id="lbi:LEPBI_I2609"/>
<dbReference type="HOGENOM" id="CLU_016739_0_0_12"/>
<dbReference type="OrthoDB" id="9809052at2"/>
<dbReference type="BioCyc" id="LBIF456481:LEPBI_RS12835-MONOMER"/>
<dbReference type="Proteomes" id="UP000001847">
    <property type="component" value="Chromosome I"/>
</dbReference>
<dbReference type="GO" id="GO:0005829">
    <property type="term" value="C:cytosol"/>
    <property type="evidence" value="ECO:0007669"/>
    <property type="project" value="TreeGrafter"/>
</dbReference>
<dbReference type="GO" id="GO:0002161">
    <property type="term" value="F:aminoacyl-tRNA deacylase activity"/>
    <property type="evidence" value="ECO:0007669"/>
    <property type="project" value="InterPro"/>
</dbReference>
<dbReference type="GO" id="GO:0005524">
    <property type="term" value="F:ATP binding"/>
    <property type="evidence" value="ECO:0007669"/>
    <property type="project" value="UniProtKB-UniRule"/>
</dbReference>
<dbReference type="GO" id="GO:0004827">
    <property type="term" value="F:proline-tRNA ligase activity"/>
    <property type="evidence" value="ECO:0007669"/>
    <property type="project" value="UniProtKB-UniRule"/>
</dbReference>
<dbReference type="GO" id="GO:0006433">
    <property type="term" value="P:prolyl-tRNA aminoacylation"/>
    <property type="evidence" value="ECO:0007669"/>
    <property type="project" value="UniProtKB-UniRule"/>
</dbReference>
<dbReference type="CDD" id="cd00861">
    <property type="entry name" value="ProRS_anticodon_short"/>
    <property type="match status" value="1"/>
</dbReference>
<dbReference type="CDD" id="cd00779">
    <property type="entry name" value="ProRS_core_prok"/>
    <property type="match status" value="1"/>
</dbReference>
<dbReference type="FunFam" id="3.30.930.10:FF:000042">
    <property type="entry name" value="probable proline--tRNA ligase, mitochondrial"/>
    <property type="match status" value="1"/>
</dbReference>
<dbReference type="Gene3D" id="3.40.50.800">
    <property type="entry name" value="Anticodon-binding domain"/>
    <property type="match status" value="1"/>
</dbReference>
<dbReference type="Gene3D" id="3.30.930.10">
    <property type="entry name" value="Bira Bifunctional Protein, Domain 2"/>
    <property type="match status" value="2"/>
</dbReference>
<dbReference type="HAMAP" id="MF_01569">
    <property type="entry name" value="Pro_tRNA_synth_type1"/>
    <property type="match status" value="1"/>
</dbReference>
<dbReference type="InterPro" id="IPR002314">
    <property type="entry name" value="aa-tRNA-synt_IIb"/>
</dbReference>
<dbReference type="InterPro" id="IPR006195">
    <property type="entry name" value="aa-tRNA-synth_II"/>
</dbReference>
<dbReference type="InterPro" id="IPR045864">
    <property type="entry name" value="aa-tRNA-synth_II/BPL/LPL"/>
</dbReference>
<dbReference type="InterPro" id="IPR004154">
    <property type="entry name" value="Anticodon-bd"/>
</dbReference>
<dbReference type="InterPro" id="IPR036621">
    <property type="entry name" value="Anticodon-bd_dom_sf"/>
</dbReference>
<dbReference type="InterPro" id="IPR002316">
    <property type="entry name" value="Pro-tRNA-ligase_IIa"/>
</dbReference>
<dbReference type="InterPro" id="IPR004500">
    <property type="entry name" value="Pro-tRNA-synth_IIa_bac-type"/>
</dbReference>
<dbReference type="InterPro" id="IPR023717">
    <property type="entry name" value="Pro-tRNA-Synthase_IIa_type1"/>
</dbReference>
<dbReference type="InterPro" id="IPR050062">
    <property type="entry name" value="Pro-tRNA_synthetase"/>
</dbReference>
<dbReference type="InterPro" id="IPR044140">
    <property type="entry name" value="ProRS_anticodon_short"/>
</dbReference>
<dbReference type="InterPro" id="IPR033730">
    <property type="entry name" value="ProRS_core_prok"/>
</dbReference>
<dbReference type="InterPro" id="IPR036754">
    <property type="entry name" value="YbaK/aa-tRNA-synt-asso_dom_sf"/>
</dbReference>
<dbReference type="InterPro" id="IPR007214">
    <property type="entry name" value="YbaK/aa-tRNA-synth-assoc-dom"/>
</dbReference>
<dbReference type="NCBIfam" id="NF006625">
    <property type="entry name" value="PRK09194.1"/>
    <property type="match status" value="1"/>
</dbReference>
<dbReference type="NCBIfam" id="TIGR00409">
    <property type="entry name" value="proS_fam_II"/>
    <property type="match status" value="1"/>
</dbReference>
<dbReference type="PANTHER" id="PTHR42753">
    <property type="entry name" value="MITOCHONDRIAL RIBOSOME PROTEIN L39/PROLYL-TRNA LIGASE FAMILY MEMBER"/>
    <property type="match status" value="1"/>
</dbReference>
<dbReference type="PANTHER" id="PTHR42753:SF2">
    <property type="entry name" value="PROLINE--TRNA LIGASE"/>
    <property type="match status" value="1"/>
</dbReference>
<dbReference type="Pfam" id="PF03129">
    <property type="entry name" value="HGTP_anticodon"/>
    <property type="match status" value="1"/>
</dbReference>
<dbReference type="Pfam" id="PF00587">
    <property type="entry name" value="tRNA-synt_2b"/>
    <property type="match status" value="1"/>
</dbReference>
<dbReference type="Pfam" id="PF04073">
    <property type="entry name" value="tRNA_edit"/>
    <property type="match status" value="1"/>
</dbReference>
<dbReference type="PRINTS" id="PR01046">
    <property type="entry name" value="TRNASYNTHPRO"/>
</dbReference>
<dbReference type="SUPFAM" id="SSF52954">
    <property type="entry name" value="Class II aaRS ABD-related"/>
    <property type="match status" value="1"/>
</dbReference>
<dbReference type="SUPFAM" id="SSF55681">
    <property type="entry name" value="Class II aaRS and biotin synthetases"/>
    <property type="match status" value="1"/>
</dbReference>
<dbReference type="SUPFAM" id="SSF55826">
    <property type="entry name" value="YbaK/ProRS associated domain"/>
    <property type="match status" value="1"/>
</dbReference>
<dbReference type="PROSITE" id="PS50862">
    <property type="entry name" value="AA_TRNA_LIGASE_II"/>
    <property type="match status" value="1"/>
</dbReference>